<sequence length="143" mass="15890">MELRYLRYFVAVARERHFTRAAKALGISQPPLSQQIKRLEEEVGTPLFRRLTRGVELTEAGEAFYEDACKILALSDAALEKARGIARGLNGNLSIGITSSDAFHPKIFALIRQFQVQNMAVQVHQVEANMSSLTAMLAEGELD</sequence>
<name>BUDR_KLEAE</name>
<dbReference type="EMBL" id="J03433">
    <property type="status" value="NOT_ANNOTATED_CDS"/>
    <property type="molecule type" value="Genomic_DNA"/>
</dbReference>
<dbReference type="SMR" id="P52665"/>
<dbReference type="STRING" id="548.EAG7_01915"/>
<dbReference type="GO" id="GO:0032993">
    <property type="term" value="C:protein-DNA complex"/>
    <property type="evidence" value="ECO:0007669"/>
    <property type="project" value="TreeGrafter"/>
</dbReference>
<dbReference type="GO" id="GO:0003677">
    <property type="term" value="F:DNA binding"/>
    <property type="evidence" value="ECO:0007669"/>
    <property type="project" value="UniProtKB-KW"/>
</dbReference>
<dbReference type="GO" id="GO:0003700">
    <property type="term" value="F:DNA-binding transcription factor activity"/>
    <property type="evidence" value="ECO:0007669"/>
    <property type="project" value="InterPro"/>
</dbReference>
<dbReference type="FunFam" id="1.10.10.10:FF:000001">
    <property type="entry name" value="LysR family transcriptional regulator"/>
    <property type="match status" value="1"/>
</dbReference>
<dbReference type="Gene3D" id="3.40.190.10">
    <property type="entry name" value="Periplasmic binding protein-like II"/>
    <property type="match status" value="1"/>
</dbReference>
<dbReference type="Gene3D" id="1.10.10.10">
    <property type="entry name" value="Winged helix-like DNA-binding domain superfamily/Winged helix DNA-binding domain"/>
    <property type="match status" value="1"/>
</dbReference>
<dbReference type="InterPro" id="IPR000847">
    <property type="entry name" value="Tscrpt_reg_HTH_LysR"/>
</dbReference>
<dbReference type="InterPro" id="IPR036388">
    <property type="entry name" value="WH-like_DNA-bd_sf"/>
</dbReference>
<dbReference type="InterPro" id="IPR036390">
    <property type="entry name" value="WH_DNA-bd_sf"/>
</dbReference>
<dbReference type="PANTHER" id="PTHR30346:SF30">
    <property type="entry name" value="SMALL NEUTRAL PROTEASE REGULATORY PROTEIN"/>
    <property type="match status" value="1"/>
</dbReference>
<dbReference type="PANTHER" id="PTHR30346">
    <property type="entry name" value="TRANSCRIPTIONAL DUAL REGULATOR HCAR-RELATED"/>
    <property type="match status" value="1"/>
</dbReference>
<dbReference type="Pfam" id="PF00126">
    <property type="entry name" value="HTH_1"/>
    <property type="match status" value="1"/>
</dbReference>
<dbReference type="PRINTS" id="PR00039">
    <property type="entry name" value="HTHLYSR"/>
</dbReference>
<dbReference type="SUPFAM" id="SSF46785">
    <property type="entry name" value="Winged helix' DNA-binding domain"/>
    <property type="match status" value="1"/>
</dbReference>
<dbReference type="PROSITE" id="PS50931">
    <property type="entry name" value="HTH_LYSR"/>
    <property type="match status" value="1"/>
</dbReference>
<comment type="function">
    <text evidence="1">Regulator of the budABC operon for 2,3-butanediol synthesis.</text>
</comment>
<comment type="similarity">
    <text evidence="3">Belongs to the LysR transcriptional regulatory family.</text>
</comment>
<organism>
    <name type="scientific">Klebsiella aerogenes</name>
    <name type="common">Enterobacter aerogenes</name>
    <dbReference type="NCBI Taxonomy" id="548"/>
    <lineage>
        <taxon>Bacteria</taxon>
        <taxon>Pseudomonadati</taxon>
        <taxon>Pseudomonadota</taxon>
        <taxon>Gammaproteobacteria</taxon>
        <taxon>Enterobacterales</taxon>
        <taxon>Enterobacteriaceae</taxon>
        <taxon>Klebsiella/Raoultella group</taxon>
        <taxon>Klebsiella</taxon>
    </lineage>
</organism>
<proteinExistence type="inferred from homology"/>
<evidence type="ECO:0000250" key="1"/>
<evidence type="ECO:0000255" key="2">
    <source>
        <dbReference type="PROSITE-ProRule" id="PRU00253"/>
    </source>
</evidence>
<evidence type="ECO:0000305" key="3"/>
<gene>
    <name type="primary">budR</name>
</gene>
<reference key="1">
    <citation type="journal article" date="1988" name="Appl. Environ. Microbiol.">
        <title>Nucleotide sequence and expression of the Enterobacter aerogenes alpha-acetolactate decarboxylase gene in brewer's yeast.</title>
        <authorList>
            <person name="Sone H."/>
            <person name="Fujii T."/>
            <person name="Kondo K."/>
            <person name="Shimizu F."/>
            <person name="Tanaka J."/>
            <person name="Inoue T."/>
        </authorList>
    </citation>
    <scope>NUCLEOTIDE SEQUENCE [GENOMIC DNA]</scope>
</reference>
<reference key="2">
    <citation type="journal article" date="1994" name="Nat. Genet.">
        <title>Large scale bacterial gene discovery by similarity search.</title>
        <authorList>
            <person name="Robison K."/>
            <person name="Gilbert W."/>
            <person name="Church G.M."/>
        </authorList>
    </citation>
    <scope>IDENTIFICATION</scope>
</reference>
<accession>P52665</accession>
<feature type="chain" id="PRO_0000105597" description="HTH-type transcriptional regulator BudR">
    <location>
        <begin position="1"/>
        <end position="143" status="greater than"/>
    </location>
</feature>
<feature type="domain" description="HTH lysR-type" evidence="2">
    <location>
        <begin position="1"/>
        <end position="58"/>
    </location>
</feature>
<feature type="DNA-binding region" description="H-T-H motif" evidence="2">
    <location>
        <begin position="18"/>
        <end position="37"/>
    </location>
</feature>
<feature type="non-terminal residue">
    <location>
        <position position="143"/>
    </location>
</feature>
<protein>
    <recommendedName>
        <fullName>HTH-type transcriptional regulator BudR</fullName>
    </recommendedName>
    <alternativeName>
        <fullName>Bud operon transcriptional regulator</fullName>
    </alternativeName>
</protein>
<keyword id="KW-0238">DNA-binding</keyword>
<keyword id="KW-0804">Transcription</keyword>
<keyword id="KW-0805">Transcription regulation</keyword>